<sequence>MRLILLSSLLLLGIFLANGDEVDPDGKVLNSLIYGVMHLQREFANLKGAFLTVHRARSFGSGSERLYVTNKEIKNFEALRQICEQAEGHIPSPQLENQNKAFANVLERHGKEAYLVVGDSANFTNWAAGEPNKAAGTCVKADTHGSWHSASCDDNLLVVCEFYFIL</sequence>
<reference key="1">
    <citation type="submission" date="2008-01" db="EMBL/GenBank/DDBJ databases">
        <title>A profile of the phospholipase A2 inhibitors of the alpha class prospected in Brazilian Crotalidae snakes: structural and phylogenetic analysis.</title>
        <authorList>
            <person name="Estevao-Costa M.I."/>
            <person name="Costa M.A.F."/>
            <person name="Mudado M.A."/>
            <person name="Franco G.R."/>
            <person name="Fortes-Dias C.L."/>
        </authorList>
    </citation>
    <scope>NUCLEOTIDE SEQUENCE [MRNA]</scope>
    <source>
        <tissue>Liver</tissue>
    </source>
</reference>
<name>PLIA8_BOTMO</name>
<dbReference type="EMBL" id="EU421923">
    <property type="protein sequence ID" value="ABZ82340.1"/>
    <property type="molecule type" value="mRNA"/>
</dbReference>
<dbReference type="SMR" id="B1A4P9"/>
<dbReference type="GO" id="GO:0005576">
    <property type="term" value="C:extracellular region"/>
    <property type="evidence" value="ECO:0007669"/>
    <property type="project" value="UniProtKB-SubCell"/>
</dbReference>
<dbReference type="GO" id="GO:0030246">
    <property type="term" value="F:carbohydrate binding"/>
    <property type="evidence" value="ECO:0007669"/>
    <property type="project" value="UniProtKB-KW"/>
</dbReference>
<dbReference type="GO" id="GO:0019834">
    <property type="term" value="F:phospholipase A2 inhibitor activity"/>
    <property type="evidence" value="ECO:0007669"/>
    <property type="project" value="UniProtKB-KW"/>
</dbReference>
<dbReference type="Gene3D" id="3.10.100.10">
    <property type="entry name" value="Mannose-Binding Protein A, subunit A"/>
    <property type="match status" value="1"/>
</dbReference>
<dbReference type="InterPro" id="IPR001304">
    <property type="entry name" value="C-type_lectin-like"/>
</dbReference>
<dbReference type="InterPro" id="IPR016186">
    <property type="entry name" value="C-type_lectin-like/link_sf"/>
</dbReference>
<dbReference type="InterPro" id="IPR018378">
    <property type="entry name" value="C-type_lectin_CS"/>
</dbReference>
<dbReference type="InterPro" id="IPR016187">
    <property type="entry name" value="CTDL_fold"/>
</dbReference>
<dbReference type="Pfam" id="PF00059">
    <property type="entry name" value="Lectin_C"/>
    <property type="match status" value="1"/>
</dbReference>
<dbReference type="SUPFAM" id="SSF56436">
    <property type="entry name" value="C-type lectin-like"/>
    <property type="match status" value="1"/>
</dbReference>
<dbReference type="PROSITE" id="PS00615">
    <property type="entry name" value="C_TYPE_LECTIN_1"/>
    <property type="match status" value="1"/>
</dbReference>
<dbReference type="PROSITE" id="PS50041">
    <property type="entry name" value="C_TYPE_LECTIN_2"/>
    <property type="match status" value="1"/>
</dbReference>
<protein>
    <recommendedName>
        <fullName>Phospholipase A2 inhibitor clone 08</fullName>
        <shortName>alpha-PLI</shortName>
    </recommendedName>
</protein>
<feature type="signal peptide" evidence="1">
    <location>
        <begin position="1"/>
        <end position="19"/>
    </location>
</feature>
<feature type="chain" id="PRO_0000356344" description="Phospholipase A2 inhibitor clone 08">
    <location>
        <begin position="20"/>
        <end position="166"/>
    </location>
</feature>
<feature type="domain" description="C-type lectin" evidence="5">
    <location>
        <begin position="46"/>
        <end position="161"/>
    </location>
</feature>
<feature type="glycosylation site" description="N-linked (GlcNAc...) asparagine" evidence="4">
    <location>
        <position position="122"/>
    </location>
</feature>
<feature type="disulfide bond" evidence="3">
    <location>
        <begin position="83"/>
        <end position="160"/>
    </location>
</feature>
<feature type="disulfide bond" evidence="3">
    <location>
        <begin position="138"/>
        <end position="152"/>
    </location>
</feature>
<comment type="function">
    <text evidence="1">This phospholipase A2 inhibitor binds directly phospholipase A2 in the presence or absence of calcium.</text>
</comment>
<comment type="subunit">
    <text evidence="2">Homotrimer; non-covalently linked.</text>
</comment>
<comment type="subcellular location">
    <subcellularLocation>
        <location evidence="7">Secreted</location>
    </subcellularLocation>
    <text evidence="6">Secreted in plasma.</text>
</comment>
<comment type="tissue specificity">
    <text evidence="7">Expressed by the liver.</text>
</comment>
<comment type="similarity">
    <text evidence="6">Belongs to the alpha-type phospholipase A2 inhibitor family.</text>
</comment>
<accession>B1A4P9</accession>
<proteinExistence type="evidence at transcript level"/>
<evidence type="ECO:0000250" key="1"/>
<evidence type="ECO:0000250" key="2">
    <source>
        <dbReference type="UniProtKB" id="A1XRN2"/>
    </source>
</evidence>
<evidence type="ECO:0000250" key="3">
    <source>
        <dbReference type="UniProtKB" id="P21755"/>
    </source>
</evidence>
<evidence type="ECO:0000255" key="4"/>
<evidence type="ECO:0000255" key="5">
    <source>
        <dbReference type="PROSITE-ProRule" id="PRU00040"/>
    </source>
</evidence>
<evidence type="ECO:0000305" key="6"/>
<evidence type="ECO:0000305" key="7">
    <source ref="1"/>
</evidence>
<keyword id="KW-0106">Calcium</keyword>
<keyword id="KW-1015">Disulfide bond</keyword>
<keyword id="KW-0325">Glycoprotein</keyword>
<keyword id="KW-0430">Lectin</keyword>
<keyword id="KW-0593">Phospholipase A2 inhibitor</keyword>
<keyword id="KW-0964">Secreted</keyword>
<keyword id="KW-0732">Signal</keyword>
<organism>
    <name type="scientific">Bothrops moojeni</name>
    <name type="common">Lance-headed viper</name>
    <name type="synonym">Caissaca</name>
    <dbReference type="NCBI Taxonomy" id="98334"/>
    <lineage>
        <taxon>Eukaryota</taxon>
        <taxon>Metazoa</taxon>
        <taxon>Chordata</taxon>
        <taxon>Craniata</taxon>
        <taxon>Vertebrata</taxon>
        <taxon>Euteleostomi</taxon>
        <taxon>Lepidosauria</taxon>
        <taxon>Squamata</taxon>
        <taxon>Bifurcata</taxon>
        <taxon>Unidentata</taxon>
        <taxon>Episquamata</taxon>
        <taxon>Toxicofera</taxon>
        <taxon>Serpentes</taxon>
        <taxon>Colubroidea</taxon>
        <taxon>Viperidae</taxon>
        <taxon>Crotalinae</taxon>
        <taxon>Bothrops</taxon>
    </lineage>
</organism>